<name>PRMA_STRA5</name>
<proteinExistence type="inferred from homology"/>
<dbReference type="EC" id="2.1.1.-" evidence="1"/>
<dbReference type="EMBL" id="AE009948">
    <property type="protein sequence ID" value="AAN00829.1"/>
    <property type="molecule type" value="Genomic_DNA"/>
</dbReference>
<dbReference type="RefSeq" id="NP_688956.1">
    <property type="nucleotide sequence ID" value="NC_004116.1"/>
</dbReference>
<dbReference type="RefSeq" id="WP_001099294.1">
    <property type="nucleotide sequence ID" value="NC_004116.1"/>
</dbReference>
<dbReference type="SMR" id="Q8DX85"/>
<dbReference type="STRING" id="208435.SAG1969"/>
<dbReference type="DNASU" id="1014779"/>
<dbReference type="KEGG" id="sag:SAG1969"/>
<dbReference type="PATRIC" id="fig|208435.3.peg.1976"/>
<dbReference type="HOGENOM" id="CLU_049382_0_1_9"/>
<dbReference type="OrthoDB" id="9785995at2"/>
<dbReference type="Proteomes" id="UP000000821">
    <property type="component" value="Chromosome"/>
</dbReference>
<dbReference type="GO" id="GO:0005737">
    <property type="term" value="C:cytoplasm"/>
    <property type="evidence" value="ECO:0007669"/>
    <property type="project" value="UniProtKB-SubCell"/>
</dbReference>
<dbReference type="GO" id="GO:0016279">
    <property type="term" value="F:protein-lysine N-methyltransferase activity"/>
    <property type="evidence" value="ECO:0007669"/>
    <property type="project" value="RHEA"/>
</dbReference>
<dbReference type="GO" id="GO:0032259">
    <property type="term" value="P:methylation"/>
    <property type="evidence" value="ECO:0007669"/>
    <property type="project" value="UniProtKB-KW"/>
</dbReference>
<dbReference type="CDD" id="cd02440">
    <property type="entry name" value="AdoMet_MTases"/>
    <property type="match status" value="1"/>
</dbReference>
<dbReference type="Gene3D" id="3.40.50.150">
    <property type="entry name" value="Vaccinia Virus protein VP39"/>
    <property type="match status" value="1"/>
</dbReference>
<dbReference type="HAMAP" id="MF_00735">
    <property type="entry name" value="Methyltr_PrmA"/>
    <property type="match status" value="1"/>
</dbReference>
<dbReference type="InterPro" id="IPR050078">
    <property type="entry name" value="Ribosomal_L11_MeTrfase_PrmA"/>
</dbReference>
<dbReference type="InterPro" id="IPR004498">
    <property type="entry name" value="Ribosomal_PrmA_MeTrfase"/>
</dbReference>
<dbReference type="InterPro" id="IPR029063">
    <property type="entry name" value="SAM-dependent_MTases_sf"/>
</dbReference>
<dbReference type="NCBIfam" id="TIGR00406">
    <property type="entry name" value="prmA"/>
    <property type="match status" value="1"/>
</dbReference>
<dbReference type="PANTHER" id="PTHR43648">
    <property type="entry name" value="ELECTRON TRANSFER FLAVOPROTEIN BETA SUBUNIT LYSINE METHYLTRANSFERASE"/>
    <property type="match status" value="1"/>
</dbReference>
<dbReference type="PANTHER" id="PTHR43648:SF1">
    <property type="entry name" value="ELECTRON TRANSFER FLAVOPROTEIN BETA SUBUNIT LYSINE METHYLTRANSFERASE"/>
    <property type="match status" value="1"/>
</dbReference>
<dbReference type="Pfam" id="PF06325">
    <property type="entry name" value="PrmA"/>
    <property type="match status" value="1"/>
</dbReference>
<dbReference type="PIRSF" id="PIRSF000401">
    <property type="entry name" value="RPL11_MTase"/>
    <property type="match status" value="1"/>
</dbReference>
<dbReference type="SUPFAM" id="SSF53335">
    <property type="entry name" value="S-adenosyl-L-methionine-dependent methyltransferases"/>
    <property type="match status" value="1"/>
</dbReference>
<feature type="chain" id="PRO_0000192314" description="Ribosomal protein L11 methyltransferase">
    <location>
        <begin position="1"/>
        <end position="317"/>
    </location>
</feature>
<feature type="binding site" evidence="1">
    <location>
        <position position="158"/>
    </location>
    <ligand>
        <name>S-adenosyl-L-methionine</name>
        <dbReference type="ChEBI" id="CHEBI:59789"/>
    </ligand>
</feature>
<feature type="binding site" evidence="1">
    <location>
        <position position="179"/>
    </location>
    <ligand>
        <name>S-adenosyl-L-methionine</name>
        <dbReference type="ChEBI" id="CHEBI:59789"/>
    </ligand>
</feature>
<feature type="binding site" evidence="1">
    <location>
        <position position="201"/>
    </location>
    <ligand>
        <name>S-adenosyl-L-methionine</name>
        <dbReference type="ChEBI" id="CHEBI:59789"/>
    </ligand>
</feature>
<feature type="binding site" evidence="1">
    <location>
        <position position="244"/>
    </location>
    <ligand>
        <name>S-adenosyl-L-methionine</name>
        <dbReference type="ChEBI" id="CHEBI:59789"/>
    </ligand>
</feature>
<gene>
    <name evidence="1" type="primary">prmA</name>
    <name type="ordered locus">SAG1969</name>
</gene>
<organism>
    <name type="scientific">Streptococcus agalactiae serotype V (strain ATCC BAA-611 / 2603 V/R)</name>
    <dbReference type="NCBI Taxonomy" id="208435"/>
    <lineage>
        <taxon>Bacteria</taxon>
        <taxon>Bacillati</taxon>
        <taxon>Bacillota</taxon>
        <taxon>Bacilli</taxon>
        <taxon>Lactobacillales</taxon>
        <taxon>Streptococcaceae</taxon>
        <taxon>Streptococcus</taxon>
    </lineage>
</organism>
<keyword id="KW-0963">Cytoplasm</keyword>
<keyword id="KW-0489">Methyltransferase</keyword>
<keyword id="KW-1185">Reference proteome</keyword>
<keyword id="KW-0949">S-adenosyl-L-methionine</keyword>
<keyword id="KW-0808">Transferase</keyword>
<evidence type="ECO:0000255" key="1">
    <source>
        <dbReference type="HAMAP-Rule" id="MF_00735"/>
    </source>
</evidence>
<comment type="function">
    <text evidence="1">Methylates ribosomal protein L11.</text>
</comment>
<comment type="catalytic activity">
    <reaction evidence="1">
        <text>L-lysyl-[protein] + 3 S-adenosyl-L-methionine = N(6),N(6),N(6)-trimethyl-L-lysyl-[protein] + 3 S-adenosyl-L-homocysteine + 3 H(+)</text>
        <dbReference type="Rhea" id="RHEA:54192"/>
        <dbReference type="Rhea" id="RHEA-COMP:9752"/>
        <dbReference type="Rhea" id="RHEA-COMP:13826"/>
        <dbReference type="ChEBI" id="CHEBI:15378"/>
        <dbReference type="ChEBI" id="CHEBI:29969"/>
        <dbReference type="ChEBI" id="CHEBI:57856"/>
        <dbReference type="ChEBI" id="CHEBI:59789"/>
        <dbReference type="ChEBI" id="CHEBI:61961"/>
    </reaction>
</comment>
<comment type="subcellular location">
    <subcellularLocation>
        <location evidence="1">Cytoplasm</location>
    </subcellularLocation>
</comment>
<comment type="similarity">
    <text evidence="1">Belongs to the methyltransferase superfamily. PrmA family.</text>
</comment>
<sequence>MNTWNELTVHVNREAEEAVSNLLIETGSQGVAISDSADYLGQEDRFGELYPEVEQSDMIAITAYYPDTLDIEAVKADLADRLANFEGFGLATGSVNLDSQELVEEDWADNWKKYYEPARITHDLTIVPSWTDYEAKAGEKIIKMDPGMAFGTGTHPTTKMSLFALEQVLRGGETVIDVGTGSGVLSIASSLLGAKDIYAYDLDDVAVRVAQENIDMNPGTENIHVAAGDLLKGVQQEVDVIVANILADILIHLTDDAYRLVKDEGYLIMSGIISEKWDMVRESAEKAGFFLETHMVQGEWNACVFKKTDDISGVIGG</sequence>
<reference key="1">
    <citation type="journal article" date="2002" name="Proc. Natl. Acad. Sci. U.S.A.">
        <title>Complete genome sequence and comparative genomic analysis of an emerging human pathogen, serotype V Streptococcus agalactiae.</title>
        <authorList>
            <person name="Tettelin H."/>
            <person name="Masignani V."/>
            <person name="Cieslewicz M.J."/>
            <person name="Eisen J.A."/>
            <person name="Peterson S.N."/>
            <person name="Wessels M.R."/>
            <person name="Paulsen I.T."/>
            <person name="Nelson K.E."/>
            <person name="Margarit I."/>
            <person name="Read T.D."/>
            <person name="Madoff L.C."/>
            <person name="Wolf A.M."/>
            <person name="Beanan M.J."/>
            <person name="Brinkac L.M."/>
            <person name="Daugherty S.C."/>
            <person name="DeBoy R.T."/>
            <person name="Durkin A.S."/>
            <person name="Kolonay J.F."/>
            <person name="Madupu R."/>
            <person name="Lewis M.R."/>
            <person name="Radune D."/>
            <person name="Fedorova N.B."/>
            <person name="Scanlan D."/>
            <person name="Khouri H.M."/>
            <person name="Mulligan S."/>
            <person name="Carty H.A."/>
            <person name="Cline R.T."/>
            <person name="Van Aken S.E."/>
            <person name="Gill J."/>
            <person name="Scarselli M."/>
            <person name="Mora M."/>
            <person name="Iacobini E.T."/>
            <person name="Brettoni C."/>
            <person name="Galli G."/>
            <person name="Mariani M."/>
            <person name="Vegni F."/>
            <person name="Maione D."/>
            <person name="Rinaudo D."/>
            <person name="Rappuoli R."/>
            <person name="Telford J.L."/>
            <person name="Kasper D.L."/>
            <person name="Grandi G."/>
            <person name="Fraser C.M."/>
        </authorList>
    </citation>
    <scope>NUCLEOTIDE SEQUENCE [LARGE SCALE GENOMIC DNA]</scope>
    <source>
        <strain>ATCC BAA-611 / 2603 V/R</strain>
    </source>
</reference>
<protein>
    <recommendedName>
        <fullName evidence="1">Ribosomal protein L11 methyltransferase</fullName>
        <shortName evidence="1">L11 Mtase</shortName>
        <ecNumber evidence="1">2.1.1.-</ecNumber>
    </recommendedName>
</protein>
<accession>Q8DX85</accession>